<evidence type="ECO:0000250" key="1"/>
<evidence type="ECO:0000255" key="2"/>
<evidence type="ECO:0000269" key="3">
    <source>
    </source>
</evidence>
<evidence type="ECO:0000269" key="4">
    <source>
    </source>
</evidence>
<evidence type="ECO:0000305" key="5"/>
<keyword id="KW-0067">ATP-binding</keyword>
<keyword id="KW-0131">Cell cycle</keyword>
<keyword id="KW-0235">DNA replication</keyword>
<keyword id="KW-0238">DNA-binding</keyword>
<keyword id="KW-0547">Nucleotide-binding</keyword>
<keyword id="KW-0539">Nucleus</keyword>
<keyword id="KW-1185">Reference proteome</keyword>
<dbReference type="EMBL" id="U15967">
    <property type="protein sequence ID" value="AAB60241.1"/>
    <property type="molecule type" value="Genomic_DNA"/>
</dbReference>
<dbReference type="EMBL" id="AE014296">
    <property type="protein sequence ID" value="AAF47843.1"/>
    <property type="molecule type" value="Genomic_DNA"/>
</dbReference>
<dbReference type="EMBL" id="AY094829">
    <property type="protein sequence ID" value="AAM11182.1"/>
    <property type="molecule type" value="mRNA"/>
</dbReference>
<dbReference type="PIR" id="S55020">
    <property type="entry name" value="S55020"/>
</dbReference>
<dbReference type="RefSeq" id="NP_523915.1">
    <property type="nucleotide sequence ID" value="NM_079191.3"/>
</dbReference>
<dbReference type="SMR" id="P53034"/>
<dbReference type="BioGRID" id="63972">
    <property type="interactions" value="27"/>
</dbReference>
<dbReference type="ComplexPortal" id="CPX-2441">
    <property type="entry name" value="Elg1-RFC-like complex"/>
</dbReference>
<dbReference type="DIP" id="DIP-22077N"/>
<dbReference type="FunCoup" id="P53034">
    <property type="interactions" value="1403"/>
</dbReference>
<dbReference type="IntAct" id="P53034">
    <property type="interactions" value="21"/>
</dbReference>
<dbReference type="STRING" id="7227.FBpp0073120"/>
<dbReference type="PaxDb" id="7227-FBpp0073120"/>
<dbReference type="DNASU" id="38492"/>
<dbReference type="EnsemblMetazoa" id="FBtr0073264">
    <property type="protein sequence ID" value="FBpp0073120"/>
    <property type="gene ID" value="FBgn0260985"/>
</dbReference>
<dbReference type="GeneID" id="38492"/>
<dbReference type="KEGG" id="dme:Dmel_CG14999"/>
<dbReference type="AGR" id="FB:FBgn0260985"/>
<dbReference type="CTD" id="5984"/>
<dbReference type="FlyBase" id="FBgn0260985">
    <property type="gene designation" value="RfC4"/>
</dbReference>
<dbReference type="VEuPathDB" id="VectorBase:FBgn0260985"/>
<dbReference type="eggNOG" id="KOG0991">
    <property type="taxonomic scope" value="Eukaryota"/>
</dbReference>
<dbReference type="GeneTree" id="ENSGT00550000075050"/>
<dbReference type="HOGENOM" id="CLU_042324_0_1_1"/>
<dbReference type="InParanoid" id="P53034"/>
<dbReference type="OMA" id="SCNYSSQ"/>
<dbReference type="OrthoDB" id="4199794at2759"/>
<dbReference type="PhylomeDB" id="P53034"/>
<dbReference type="Reactome" id="R-DME-110312">
    <property type="pathway name" value="Translesion synthesis by REV1"/>
</dbReference>
<dbReference type="Reactome" id="R-DME-110314">
    <property type="pathway name" value="Recognition of DNA damage by PCNA-containing replication complex"/>
</dbReference>
<dbReference type="Reactome" id="R-DME-110320">
    <property type="pathway name" value="Translesion Synthesis by POLH"/>
</dbReference>
<dbReference type="Reactome" id="R-DME-174411">
    <property type="pathway name" value="Polymerase switching on the C-strand of the telomere"/>
</dbReference>
<dbReference type="Reactome" id="R-DME-176187">
    <property type="pathway name" value="Activation of ATR in response to replication stress"/>
</dbReference>
<dbReference type="Reactome" id="R-DME-5651801">
    <property type="pathway name" value="PCNA-Dependent Long Patch Base Excision Repair"/>
</dbReference>
<dbReference type="Reactome" id="R-DME-5655862">
    <property type="pathway name" value="Translesion synthesis by POLK"/>
</dbReference>
<dbReference type="Reactome" id="R-DME-5656121">
    <property type="pathway name" value="Translesion synthesis by POLI"/>
</dbReference>
<dbReference type="Reactome" id="R-DME-5656169">
    <property type="pathway name" value="Termination of translesion DNA synthesis"/>
</dbReference>
<dbReference type="Reactome" id="R-DME-5693607">
    <property type="pathway name" value="Processing of DNA double-strand break ends"/>
</dbReference>
<dbReference type="Reactome" id="R-DME-5696397">
    <property type="pathway name" value="Gap-filling DNA repair synthesis and ligation in GG-NER"/>
</dbReference>
<dbReference type="Reactome" id="R-DME-5696400">
    <property type="pathway name" value="Dual Incision in GG-NER"/>
</dbReference>
<dbReference type="Reactome" id="R-DME-6782135">
    <property type="pathway name" value="Dual incision in TC-NER"/>
</dbReference>
<dbReference type="Reactome" id="R-DME-6782210">
    <property type="pathway name" value="Gap-filling DNA repair synthesis and ligation in TC-NER"/>
</dbReference>
<dbReference type="Reactome" id="R-DME-6804756">
    <property type="pathway name" value="Regulation of TP53 Activity through Phosphorylation"/>
</dbReference>
<dbReference type="Reactome" id="R-DME-69091">
    <property type="pathway name" value="Polymerase switching"/>
</dbReference>
<dbReference type="Reactome" id="R-DME-69473">
    <property type="pathway name" value="G2/M DNA damage checkpoint"/>
</dbReference>
<dbReference type="SignaLink" id="P53034"/>
<dbReference type="BioGRID-ORCS" id="38492">
    <property type="hits" value="0 hits in 1 CRISPR screen"/>
</dbReference>
<dbReference type="GenomeRNAi" id="38492"/>
<dbReference type="PRO" id="PR:P53034"/>
<dbReference type="Proteomes" id="UP000000803">
    <property type="component" value="Chromosome 3L"/>
</dbReference>
<dbReference type="Bgee" id="FBgn0260985">
    <property type="expression patterns" value="Expressed in secondary oocyte and 73 other cell types or tissues"/>
</dbReference>
<dbReference type="GO" id="GO:0005663">
    <property type="term" value="C:DNA replication factor C complex"/>
    <property type="evidence" value="ECO:0000250"/>
    <property type="project" value="FlyBase"/>
</dbReference>
<dbReference type="GO" id="GO:0031391">
    <property type="term" value="C:Elg1 RFC-like complex"/>
    <property type="evidence" value="ECO:0000314"/>
    <property type="project" value="FlyBase"/>
</dbReference>
<dbReference type="GO" id="GO:0005634">
    <property type="term" value="C:nucleus"/>
    <property type="evidence" value="ECO:0000314"/>
    <property type="project" value="UniProtKB"/>
</dbReference>
<dbReference type="GO" id="GO:0005524">
    <property type="term" value="F:ATP binding"/>
    <property type="evidence" value="ECO:0007669"/>
    <property type="project" value="UniProtKB-KW"/>
</dbReference>
<dbReference type="GO" id="GO:0016887">
    <property type="term" value="F:ATP hydrolysis activity"/>
    <property type="evidence" value="ECO:0007669"/>
    <property type="project" value="InterPro"/>
</dbReference>
<dbReference type="GO" id="GO:0003677">
    <property type="term" value="F:DNA binding"/>
    <property type="evidence" value="ECO:0000315"/>
    <property type="project" value="UniProtKB"/>
</dbReference>
<dbReference type="GO" id="GO:0000077">
    <property type="term" value="P:DNA damage checkpoint signaling"/>
    <property type="evidence" value="ECO:0000315"/>
    <property type="project" value="FlyBase"/>
</dbReference>
<dbReference type="GO" id="GO:0006281">
    <property type="term" value="P:DNA repair"/>
    <property type="evidence" value="ECO:0000318"/>
    <property type="project" value="GO_Central"/>
</dbReference>
<dbReference type="GO" id="GO:0006260">
    <property type="term" value="P:DNA replication"/>
    <property type="evidence" value="ECO:0000315"/>
    <property type="project" value="UniProtKB"/>
</dbReference>
<dbReference type="GO" id="GO:0000076">
    <property type="term" value="P:DNA replication checkpoint signaling"/>
    <property type="evidence" value="ECO:0000315"/>
    <property type="project" value="FlyBase"/>
</dbReference>
<dbReference type="GO" id="GO:0006271">
    <property type="term" value="P:DNA strand elongation involved in DNA replication"/>
    <property type="evidence" value="ECO:0000304"/>
    <property type="project" value="FlyBase"/>
</dbReference>
<dbReference type="GO" id="GO:0006261">
    <property type="term" value="P:DNA-templated DNA replication"/>
    <property type="evidence" value="ECO:0000318"/>
    <property type="project" value="GO_Central"/>
</dbReference>
<dbReference type="GO" id="GO:0006272">
    <property type="term" value="P:leading strand elongation"/>
    <property type="evidence" value="ECO:0000250"/>
    <property type="project" value="FlyBase"/>
</dbReference>
<dbReference type="GO" id="GO:0007062">
    <property type="term" value="P:sister chromatid cohesion"/>
    <property type="evidence" value="ECO:0000250"/>
    <property type="project" value="FlyBase"/>
</dbReference>
<dbReference type="CDD" id="cd00009">
    <property type="entry name" value="AAA"/>
    <property type="match status" value="1"/>
</dbReference>
<dbReference type="CDD" id="cd18140">
    <property type="entry name" value="HLD_clamp_RFC"/>
    <property type="match status" value="1"/>
</dbReference>
<dbReference type="FunFam" id="1.20.272.10:FF:000006">
    <property type="entry name" value="Replication factor C subunit 2"/>
    <property type="match status" value="1"/>
</dbReference>
<dbReference type="FunFam" id="1.10.8.60:FF:000012">
    <property type="entry name" value="Replication factor C subunit 4"/>
    <property type="match status" value="1"/>
</dbReference>
<dbReference type="FunFam" id="3.40.50.300:FF:000107">
    <property type="entry name" value="Replication factor C subunit 4"/>
    <property type="match status" value="1"/>
</dbReference>
<dbReference type="Gene3D" id="1.10.8.60">
    <property type="match status" value="1"/>
</dbReference>
<dbReference type="Gene3D" id="1.20.272.10">
    <property type="match status" value="1"/>
</dbReference>
<dbReference type="Gene3D" id="3.40.50.300">
    <property type="entry name" value="P-loop containing nucleotide triphosphate hydrolases"/>
    <property type="match status" value="1"/>
</dbReference>
<dbReference type="InterPro" id="IPR003593">
    <property type="entry name" value="AAA+_ATPase"/>
</dbReference>
<dbReference type="InterPro" id="IPR003959">
    <property type="entry name" value="ATPase_AAA_core"/>
</dbReference>
<dbReference type="InterPro" id="IPR008921">
    <property type="entry name" value="DNA_pol3_clamp-load_cplx_C"/>
</dbReference>
<dbReference type="InterPro" id="IPR050238">
    <property type="entry name" value="DNA_Rep/Repair_Clamp_Loader"/>
</dbReference>
<dbReference type="InterPro" id="IPR027417">
    <property type="entry name" value="P-loop_NTPase"/>
</dbReference>
<dbReference type="InterPro" id="IPR013748">
    <property type="entry name" value="Rep_factorC_C"/>
</dbReference>
<dbReference type="InterPro" id="IPR047854">
    <property type="entry name" value="RFC_lid"/>
</dbReference>
<dbReference type="NCBIfam" id="NF001679">
    <property type="entry name" value="PRK00440.1"/>
    <property type="match status" value="1"/>
</dbReference>
<dbReference type="PANTHER" id="PTHR11669">
    <property type="entry name" value="REPLICATION FACTOR C / DNA POLYMERASE III GAMMA-TAU SUBUNIT"/>
    <property type="match status" value="1"/>
</dbReference>
<dbReference type="PANTHER" id="PTHR11669:SF5">
    <property type="entry name" value="REPLICATION FACTOR C SUBUNIT 2"/>
    <property type="match status" value="1"/>
</dbReference>
<dbReference type="Pfam" id="PF00004">
    <property type="entry name" value="AAA"/>
    <property type="match status" value="1"/>
</dbReference>
<dbReference type="Pfam" id="PF08542">
    <property type="entry name" value="Rep_fac_C"/>
    <property type="match status" value="1"/>
</dbReference>
<dbReference type="SMART" id="SM00382">
    <property type="entry name" value="AAA"/>
    <property type="match status" value="1"/>
</dbReference>
<dbReference type="SUPFAM" id="SSF52540">
    <property type="entry name" value="P-loop containing nucleoside triphosphate hydrolases"/>
    <property type="match status" value="1"/>
</dbReference>
<dbReference type="SUPFAM" id="SSF48019">
    <property type="entry name" value="post-AAA+ oligomerization domain-like"/>
    <property type="match status" value="1"/>
</dbReference>
<proteinExistence type="evidence at protein level"/>
<reference key="1">
    <citation type="journal article" date="1995" name="Genetics">
        <title>A genetic analysis of the 63E-64A genomic region of Drosophila melanogaster: identification of mutations in a replication factor C subunit.</title>
        <authorList>
            <person name="Harrison S.D."/>
            <person name="Solomon N."/>
            <person name="Rubin G.M."/>
        </authorList>
    </citation>
    <scope>NUCLEOTIDE SEQUENCE [GENOMIC DNA]</scope>
    <scope>SUBCELLULAR LOCATION</scope>
    <scope>DEVELOPMENTAL STAGE</scope>
    <source>
        <strain>Iso-1 / Kennison</strain>
    </source>
</reference>
<reference key="2">
    <citation type="journal article" date="2000" name="Science">
        <title>The genome sequence of Drosophila melanogaster.</title>
        <authorList>
            <person name="Adams M.D."/>
            <person name="Celniker S.E."/>
            <person name="Holt R.A."/>
            <person name="Evans C.A."/>
            <person name="Gocayne J.D."/>
            <person name="Amanatides P.G."/>
            <person name="Scherer S.E."/>
            <person name="Li P.W."/>
            <person name="Hoskins R.A."/>
            <person name="Galle R.F."/>
            <person name="George R.A."/>
            <person name="Lewis S.E."/>
            <person name="Richards S."/>
            <person name="Ashburner M."/>
            <person name="Henderson S.N."/>
            <person name="Sutton G.G."/>
            <person name="Wortman J.R."/>
            <person name="Yandell M.D."/>
            <person name="Zhang Q."/>
            <person name="Chen L.X."/>
            <person name="Brandon R.C."/>
            <person name="Rogers Y.-H.C."/>
            <person name="Blazej R.G."/>
            <person name="Champe M."/>
            <person name="Pfeiffer B.D."/>
            <person name="Wan K.H."/>
            <person name="Doyle C."/>
            <person name="Baxter E.G."/>
            <person name="Helt G."/>
            <person name="Nelson C.R."/>
            <person name="Miklos G.L.G."/>
            <person name="Abril J.F."/>
            <person name="Agbayani A."/>
            <person name="An H.-J."/>
            <person name="Andrews-Pfannkoch C."/>
            <person name="Baldwin D."/>
            <person name="Ballew R.M."/>
            <person name="Basu A."/>
            <person name="Baxendale J."/>
            <person name="Bayraktaroglu L."/>
            <person name="Beasley E.M."/>
            <person name="Beeson K.Y."/>
            <person name="Benos P.V."/>
            <person name="Berman B.P."/>
            <person name="Bhandari D."/>
            <person name="Bolshakov S."/>
            <person name="Borkova D."/>
            <person name="Botchan M.R."/>
            <person name="Bouck J."/>
            <person name="Brokstein P."/>
            <person name="Brottier P."/>
            <person name="Burtis K.C."/>
            <person name="Busam D.A."/>
            <person name="Butler H."/>
            <person name="Cadieu E."/>
            <person name="Center A."/>
            <person name="Chandra I."/>
            <person name="Cherry J.M."/>
            <person name="Cawley S."/>
            <person name="Dahlke C."/>
            <person name="Davenport L.B."/>
            <person name="Davies P."/>
            <person name="de Pablos B."/>
            <person name="Delcher A."/>
            <person name="Deng Z."/>
            <person name="Mays A.D."/>
            <person name="Dew I."/>
            <person name="Dietz S.M."/>
            <person name="Dodson K."/>
            <person name="Doup L.E."/>
            <person name="Downes M."/>
            <person name="Dugan-Rocha S."/>
            <person name="Dunkov B.C."/>
            <person name="Dunn P."/>
            <person name="Durbin K.J."/>
            <person name="Evangelista C.C."/>
            <person name="Ferraz C."/>
            <person name="Ferriera S."/>
            <person name="Fleischmann W."/>
            <person name="Fosler C."/>
            <person name="Gabrielian A.E."/>
            <person name="Garg N.S."/>
            <person name="Gelbart W.M."/>
            <person name="Glasser K."/>
            <person name="Glodek A."/>
            <person name="Gong F."/>
            <person name="Gorrell J.H."/>
            <person name="Gu Z."/>
            <person name="Guan P."/>
            <person name="Harris M."/>
            <person name="Harris N.L."/>
            <person name="Harvey D.A."/>
            <person name="Heiman T.J."/>
            <person name="Hernandez J.R."/>
            <person name="Houck J."/>
            <person name="Hostin D."/>
            <person name="Houston K.A."/>
            <person name="Howland T.J."/>
            <person name="Wei M.-H."/>
            <person name="Ibegwam C."/>
            <person name="Jalali M."/>
            <person name="Kalush F."/>
            <person name="Karpen G.H."/>
            <person name="Ke Z."/>
            <person name="Kennison J.A."/>
            <person name="Ketchum K.A."/>
            <person name="Kimmel B.E."/>
            <person name="Kodira C.D."/>
            <person name="Kraft C.L."/>
            <person name="Kravitz S."/>
            <person name="Kulp D."/>
            <person name="Lai Z."/>
            <person name="Lasko P."/>
            <person name="Lei Y."/>
            <person name="Levitsky A.A."/>
            <person name="Li J.H."/>
            <person name="Li Z."/>
            <person name="Liang Y."/>
            <person name="Lin X."/>
            <person name="Liu X."/>
            <person name="Mattei B."/>
            <person name="McIntosh T.C."/>
            <person name="McLeod M.P."/>
            <person name="McPherson D."/>
            <person name="Merkulov G."/>
            <person name="Milshina N.V."/>
            <person name="Mobarry C."/>
            <person name="Morris J."/>
            <person name="Moshrefi A."/>
            <person name="Mount S.M."/>
            <person name="Moy M."/>
            <person name="Murphy B."/>
            <person name="Murphy L."/>
            <person name="Muzny D.M."/>
            <person name="Nelson D.L."/>
            <person name="Nelson D.R."/>
            <person name="Nelson K.A."/>
            <person name="Nixon K."/>
            <person name="Nusskern D.R."/>
            <person name="Pacleb J.M."/>
            <person name="Palazzolo M."/>
            <person name="Pittman G.S."/>
            <person name="Pan S."/>
            <person name="Pollard J."/>
            <person name="Puri V."/>
            <person name="Reese M.G."/>
            <person name="Reinert K."/>
            <person name="Remington K."/>
            <person name="Saunders R.D.C."/>
            <person name="Scheeler F."/>
            <person name="Shen H."/>
            <person name="Shue B.C."/>
            <person name="Siden-Kiamos I."/>
            <person name="Simpson M."/>
            <person name="Skupski M.P."/>
            <person name="Smith T.J."/>
            <person name="Spier E."/>
            <person name="Spradling A.C."/>
            <person name="Stapleton M."/>
            <person name="Strong R."/>
            <person name="Sun E."/>
            <person name="Svirskas R."/>
            <person name="Tector C."/>
            <person name="Turner R."/>
            <person name="Venter E."/>
            <person name="Wang A.H."/>
            <person name="Wang X."/>
            <person name="Wang Z.-Y."/>
            <person name="Wassarman D.A."/>
            <person name="Weinstock G.M."/>
            <person name="Weissenbach J."/>
            <person name="Williams S.M."/>
            <person name="Woodage T."/>
            <person name="Worley K.C."/>
            <person name="Wu D."/>
            <person name="Yang S."/>
            <person name="Yao Q.A."/>
            <person name="Ye J."/>
            <person name="Yeh R.-F."/>
            <person name="Zaveri J.S."/>
            <person name="Zhan M."/>
            <person name="Zhang G."/>
            <person name="Zhao Q."/>
            <person name="Zheng L."/>
            <person name="Zheng X.H."/>
            <person name="Zhong F.N."/>
            <person name="Zhong W."/>
            <person name="Zhou X."/>
            <person name="Zhu S.C."/>
            <person name="Zhu X."/>
            <person name="Smith H.O."/>
            <person name="Gibbs R.A."/>
            <person name="Myers E.W."/>
            <person name="Rubin G.M."/>
            <person name="Venter J.C."/>
        </authorList>
    </citation>
    <scope>NUCLEOTIDE SEQUENCE [LARGE SCALE GENOMIC DNA]</scope>
    <source>
        <strain>Berkeley</strain>
    </source>
</reference>
<reference key="3">
    <citation type="journal article" date="2002" name="Genome Biol.">
        <title>Annotation of the Drosophila melanogaster euchromatic genome: a systematic review.</title>
        <authorList>
            <person name="Misra S."/>
            <person name="Crosby M.A."/>
            <person name="Mungall C.J."/>
            <person name="Matthews B.B."/>
            <person name="Campbell K.S."/>
            <person name="Hradecky P."/>
            <person name="Huang Y."/>
            <person name="Kaminker J.S."/>
            <person name="Millburn G.H."/>
            <person name="Prochnik S.E."/>
            <person name="Smith C.D."/>
            <person name="Tupy J.L."/>
            <person name="Whitfield E.J."/>
            <person name="Bayraktaroglu L."/>
            <person name="Berman B.P."/>
            <person name="Bettencourt B.R."/>
            <person name="Celniker S.E."/>
            <person name="de Grey A.D.N.J."/>
            <person name="Drysdale R.A."/>
            <person name="Harris N.L."/>
            <person name="Richter J."/>
            <person name="Russo S."/>
            <person name="Schroeder A.J."/>
            <person name="Shu S.Q."/>
            <person name="Stapleton M."/>
            <person name="Yamada C."/>
            <person name="Ashburner M."/>
            <person name="Gelbart W.M."/>
            <person name="Rubin G.M."/>
            <person name="Lewis S.E."/>
        </authorList>
    </citation>
    <scope>GENOME REANNOTATION</scope>
    <source>
        <strain>Berkeley</strain>
    </source>
</reference>
<reference key="4">
    <citation type="journal article" date="2002" name="Genome Biol.">
        <title>A Drosophila full-length cDNA resource.</title>
        <authorList>
            <person name="Stapleton M."/>
            <person name="Carlson J.W."/>
            <person name="Brokstein P."/>
            <person name="Yu C."/>
            <person name="Champe M."/>
            <person name="George R.A."/>
            <person name="Guarin H."/>
            <person name="Kronmiller B."/>
            <person name="Pacleb J.M."/>
            <person name="Park S."/>
            <person name="Wan K.H."/>
            <person name="Rubin G.M."/>
            <person name="Celniker S.E."/>
        </authorList>
    </citation>
    <scope>NUCLEOTIDE SEQUENCE [LARGE SCALE MRNA]</scope>
    <source>
        <strain>Berkeley</strain>
        <tissue>Embryo</tissue>
    </source>
</reference>
<reference key="5">
    <citation type="journal article" date="2001" name="Mol. Cell. Biol.">
        <title>Loss of cell cycle checkpoint control in Drosophila Rfc4 mutants.</title>
        <authorList>
            <person name="Krause S.A."/>
            <person name="Loupart M.-L."/>
            <person name="Vass S."/>
            <person name="Schoenfelder S."/>
            <person name="Harrison S."/>
            <person name="Heck M.M.S."/>
        </authorList>
    </citation>
    <scope>FUNCTION</scope>
    <scope>SUBCELLULAR LOCATION</scope>
    <scope>DISRUPTION PHENOTYPE</scope>
</reference>
<organism>
    <name type="scientific">Drosophila melanogaster</name>
    <name type="common">Fruit fly</name>
    <dbReference type="NCBI Taxonomy" id="7227"/>
    <lineage>
        <taxon>Eukaryota</taxon>
        <taxon>Metazoa</taxon>
        <taxon>Ecdysozoa</taxon>
        <taxon>Arthropoda</taxon>
        <taxon>Hexapoda</taxon>
        <taxon>Insecta</taxon>
        <taxon>Pterygota</taxon>
        <taxon>Neoptera</taxon>
        <taxon>Endopterygota</taxon>
        <taxon>Diptera</taxon>
        <taxon>Brachycera</taxon>
        <taxon>Muscomorpha</taxon>
        <taxon>Ephydroidea</taxon>
        <taxon>Drosophilidae</taxon>
        <taxon>Drosophila</taxon>
        <taxon>Sophophora</taxon>
    </lineage>
</organism>
<accession>P53034</accession>
<accession>Q9VZH9</accession>
<name>RFC2_DROME</name>
<gene>
    <name type="primary">RfC4</name>
    <name type="synonym">RfC40</name>
    <name type="ORF">CG14999</name>
</gene>
<protein>
    <recommendedName>
        <fullName>Replication factor C subunit 2</fullName>
    </recommendedName>
    <alternativeName>
        <fullName>Activator 1 40 kDa subunit</fullName>
        <shortName>A1 40 kDa subunit</shortName>
    </alternativeName>
    <alternativeName>
        <fullName>Activator 1 subunit 2</fullName>
    </alternativeName>
    <alternativeName>
        <fullName>Replication factor C 40 kDa subunit</fullName>
        <shortName>RF-C 40 kDa subunit</shortName>
        <shortName>RFC40</shortName>
    </alternativeName>
    <alternativeName>
        <fullName>Replication factor C subunit 4</fullName>
        <shortName>DmRfc4</shortName>
    </alternativeName>
</protein>
<sequence>MPEEPEKTADDKRSHLPWIEKYRPVKFKEIVGNEDTVARLSVFATQGNAPNIIIAGPPGVGKTTTIQCLARILLGDSYKEAVLELNASNERGIDVVRNKIKMFAQQKVTLPRGRHKIVILDEADSMTEGAQQALRRTMEIYSSTTRFALACNTSEKIIEPIQSRCAMLRFTKLSDAQVLAKLIEVAKWEKLNYTEDGLEAIVFTAQGDMRQGLNNLQSTAQGFGDITAENVFKVCDEPHPKLLEEMIHHCAANDIHKAYKILAKLWKLGYSPEDIIANIFRVCKRINIDEHLKLDFIREIGITHMKIIDGINSLLQLTALLAKLCIAAEKH</sequence>
<feature type="chain" id="PRO_0000121769" description="Replication factor C subunit 2">
    <location>
        <begin position="1"/>
        <end position="331"/>
    </location>
</feature>
<feature type="binding site" evidence="2">
    <location>
        <begin position="56"/>
        <end position="63"/>
    </location>
    <ligand>
        <name>ATP</name>
        <dbReference type="ChEBI" id="CHEBI:30616"/>
    </ligand>
</feature>
<comment type="function">
    <text evidence="3">The elongation of primed DNA templates by DNA polymerase delta and epsilon requires the action of the accessory proteins proliferating cell nuclear antigen (PCNA) and activator 1. Subunit 2 binds ATP.</text>
</comment>
<comment type="subunit">
    <text evidence="1">Heteropentamer of subunits of 140/145, 40, 38, 37, and 36.5 kDa that forms a complex with PCNA in the presence of ATP.</text>
</comment>
<comment type="interaction">
    <interactant intactId="EBI-184606">
        <id>P53034</id>
    </interactant>
    <interactant intactId="EBI-118156">
        <id>Q9VKW3</id>
        <label>RfC3</label>
    </interactant>
    <organismsDiffer>false</organismsDiffer>
    <experiments>4</experiments>
</comment>
<comment type="interaction">
    <interactant intactId="EBI-184606">
        <id>P53034</id>
    </interactant>
    <interactant intactId="EBI-88723">
        <id>Q9VX15</id>
        <label>Rfc37</label>
    </interactant>
    <organismsDiffer>false</organismsDiffer>
    <experiments>2</experiments>
</comment>
<comment type="interaction">
    <interactant intactId="EBI-184606">
        <id>P53034</id>
    </interactant>
    <interactant intactId="EBI-189726">
        <id>Q9U9Q1</id>
        <label>RfC38</label>
    </interactant>
    <organismsDiffer>false</organismsDiffer>
    <experiments>2</experiments>
</comment>
<comment type="subcellular location">
    <subcellularLocation>
        <location evidence="3 4">Nucleus</location>
    </subcellularLocation>
    <text>Localizes to all replicating nuclei, it is dispersed from chromatin in mitosis.</text>
</comment>
<comment type="developmental stage">
    <text evidence="4">Expressed in early embryos.</text>
</comment>
<comment type="disruption phenotype">
    <text evidence="3">Defects in mitotic chromosome cohesion and condensation due to aberrant checkpoint control in response to DNA replication inhibition or damage to chromosomes; premature chromosome condensation and precocious sister chromatid separation figures.</text>
</comment>
<comment type="similarity">
    <text evidence="5">Belongs to the activator 1 small subunits family.</text>
</comment>